<reference key="1">
    <citation type="journal article" date="2000" name="Nature">
        <title>Sequence and analysis of chromosome 1 of the plant Arabidopsis thaliana.</title>
        <authorList>
            <person name="Theologis A."/>
            <person name="Ecker J.R."/>
            <person name="Palm C.J."/>
            <person name="Federspiel N.A."/>
            <person name="Kaul S."/>
            <person name="White O."/>
            <person name="Alonso J."/>
            <person name="Altafi H."/>
            <person name="Araujo R."/>
            <person name="Bowman C.L."/>
            <person name="Brooks S.Y."/>
            <person name="Buehler E."/>
            <person name="Chan A."/>
            <person name="Chao Q."/>
            <person name="Chen H."/>
            <person name="Cheuk R.F."/>
            <person name="Chin C.W."/>
            <person name="Chung M.K."/>
            <person name="Conn L."/>
            <person name="Conway A.B."/>
            <person name="Conway A.R."/>
            <person name="Creasy T.H."/>
            <person name="Dewar K."/>
            <person name="Dunn P."/>
            <person name="Etgu P."/>
            <person name="Feldblyum T.V."/>
            <person name="Feng J.-D."/>
            <person name="Fong B."/>
            <person name="Fujii C.Y."/>
            <person name="Gill J.E."/>
            <person name="Goldsmith A.D."/>
            <person name="Haas B."/>
            <person name="Hansen N.F."/>
            <person name="Hughes B."/>
            <person name="Huizar L."/>
            <person name="Hunter J.L."/>
            <person name="Jenkins J."/>
            <person name="Johnson-Hopson C."/>
            <person name="Khan S."/>
            <person name="Khaykin E."/>
            <person name="Kim C.J."/>
            <person name="Koo H.L."/>
            <person name="Kremenetskaia I."/>
            <person name="Kurtz D.B."/>
            <person name="Kwan A."/>
            <person name="Lam B."/>
            <person name="Langin-Hooper S."/>
            <person name="Lee A."/>
            <person name="Lee J.M."/>
            <person name="Lenz C.A."/>
            <person name="Li J.H."/>
            <person name="Li Y.-P."/>
            <person name="Lin X."/>
            <person name="Liu S.X."/>
            <person name="Liu Z.A."/>
            <person name="Luros J.S."/>
            <person name="Maiti R."/>
            <person name="Marziali A."/>
            <person name="Militscher J."/>
            <person name="Miranda M."/>
            <person name="Nguyen M."/>
            <person name="Nierman W.C."/>
            <person name="Osborne B.I."/>
            <person name="Pai G."/>
            <person name="Peterson J."/>
            <person name="Pham P.K."/>
            <person name="Rizzo M."/>
            <person name="Rooney T."/>
            <person name="Rowley D."/>
            <person name="Sakano H."/>
            <person name="Salzberg S.L."/>
            <person name="Schwartz J.R."/>
            <person name="Shinn P."/>
            <person name="Southwick A.M."/>
            <person name="Sun H."/>
            <person name="Tallon L.J."/>
            <person name="Tambunga G."/>
            <person name="Toriumi M.J."/>
            <person name="Town C.D."/>
            <person name="Utterback T."/>
            <person name="Van Aken S."/>
            <person name="Vaysberg M."/>
            <person name="Vysotskaia V.S."/>
            <person name="Walker M."/>
            <person name="Wu D."/>
            <person name="Yu G."/>
            <person name="Fraser C.M."/>
            <person name="Venter J.C."/>
            <person name="Davis R.W."/>
        </authorList>
    </citation>
    <scope>NUCLEOTIDE SEQUENCE [LARGE SCALE GENOMIC DNA]</scope>
    <source>
        <strain>cv. Columbia</strain>
    </source>
</reference>
<reference key="2">
    <citation type="journal article" date="2017" name="Plant J.">
        <title>Araport11: a complete reannotation of the Arabidopsis thaliana reference genome.</title>
        <authorList>
            <person name="Cheng C.Y."/>
            <person name="Krishnakumar V."/>
            <person name="Chan A.P."/>
            <person name="Thibaud-Nissen F."/>
            <person name="Schobel S."/>
            <person name="Town C.D."/>
        </authorList>
    </citation>
    <scope>GENOME REANNOTATION</scope>
    <source>
        <strain>cv. Columbia</strain>
    </source>
</reference>
<reference key="3">
    <citation type="submission" date="2005-05" db="EMBL/GenBank/DDBJ databases">
        <authorList>
            <person name="Underwood B.A."/>
            <person name="Xiao Y.-L."/>
            <person name="Moskal W.A. Jr."/>
            <person name="Monaghan E.L."/>
            <person name="Wang W."/>
            <person name="Redman J.C."/>
            <person name="Wu H.C."/>
            <person name="Utterback T."/>
            <person name="Town C.D."/>
        </authorList>
    </citation>
    <scope>NUCLEOTIDE SEQUENCE [LARGE SCALE MRNA]</scope>
    <source>
        <strain>cv. Columbia</strain>
    </source>
</reference>
<protein>
    <recommendedName>
        <fullName>Lectin-like protein At1g53080</fullName>
    </recommendedName>
</protein>
<gene>
    <name type="ordered locus">At1g53080</name>
    <name type="ORF">F8L10.6</name>
</gene>
<name>LECT4_ARATH</name>
<accession>Q9LNN3</accession>
<feature type="signal peptide" evidence="3">
    <location>
        <begin position="1"/>
        <end position="23"/>
    </location>
</feature>
<feature type="chain" id="PRO_0000428920" description="Lectin-like protein At1g53080">
    <location>
        <begin position="24"/>
        <end position="283"/>
    </location>
</feature>
<feature type="region of interest" description="Legume-lectin like">
    <location>
        <begin position="24"/>
        <end position="277"/>
    </location>
</feature>
<feature type="modified residue" description="Phosphoserine" evidence="2">
    <location>
        <position position="247"/>
    </location>
</feature>
<feature type="glycosylation site" description="N-linked (GlcNAc...) asparagine" evidence="3">
    <location>
        <position position="84"/>
    </location>
</feature>
<feature type="glycosylation site" description="N-linked (GlcNAc...) asparagine" evidence="3">
    <location>
        <position position="138"/>
    </location>
</feature>
<sequence>MQIHKLCIFVLFISLLSSKTISAVKFNFNRFDGTNLIFIGYAELGPATDGMSRSGALSMTRDNIPFSHGQGLYTDPIPFKSSNNTSSSVYSFKTSFTFSITPRRSNPNPGHGIAFIVVPTVAYEYDQDSTRGFLGLVNLTTNGNPNNHLFAVEFDVFQDKRFGDINDNHVGVNINSVNSKVSEKAGYWIQTRTRGKNQWLFKEVKLSSGDNYKAWIEYKNSKVIVWLAPAHLKKPKRPLIETQVDLSEVVLETMYTGFSGSMGRGVERHDIWSWSFENTAKNN</sequence>
<proteinExistence type="evidence at transcript level"/>
<keyword id="KW-0052">Apoplast</keyword>
<keyword id="KW-0325">Glycoprotein</keyword>
<keyword id="KW-0430">Lectin</keyword>
<keyword id="KW-0597">Phosphoprotein</keyword>
<keyword id="KW-1185">Reference proteome</keyword>
<keyword id="KW-0964">Secreted</keyword>
<keyword id="KW-0732">Signal</keyword>
<organism>
    <name type="scientific">Arabidopsis thaliana</name>
    <name type="common">Mouse-ear cress</name>
    <dbReference type="NCBI Taxonomy" id="3702"/>
    <lineage>
        <taxon>Eukaryota</taxon>
        <taxon>Viridiplantae</taxon>
        <taxon>Streptophyta</taxon>
        <taxon>Embryophyta</taxon>
        <taxon>Tracheophyta</taxon>
        <taxon>Spermatophyta</taxon>
        <taxon>Magnoliopsida</taxon>
        <taxon>eudicotyledons</taxon>
        <taxon>Gunneridae</taxon>
        <taxon>Pentapetalae</taxon>
        <taxon>rosids</taxon>
        <taxon>malvids</taxon>
        <taxon>Brassicales</taxon>
        <taxon>Brassicaceae</taxon>
        <taxon>Camelineae</taxon>
        <taxon>Arabidopsis</taxon>
    </lineage>
</organism>
<evidence type="ECO:0000250" key="1"/>
<evidence type="ECO:0000250" key="2">
    <source>
        <dbReference type="UniProtKB" id="Q9LZF5"/>
    </source>
</evidence>
<evidence type="ECO:0000255" key="3"/>
<evidence type="ECO:0000305" key="4"/>
<dbReference type="EMBL" id="AC022520">
    <property type="protein sequence ID" value="AAF87860.1"/>
    <property type="molecule type" value="Genomic_DNA"/>
</dbReference>
<dbReference type="EMBL" id="CP002684">
    <property type="protein sequence ID" value="AEE32887.1"/>
    <property type="molecule type" value="Genomic_DNA"/>
</dbReference>
<dbReference type="EMBL" id="DQ056494">
    <property type="protein sequence ID" value="AAY78651.1"/>
    <property type="molecule type" value="mRNA"/>
</dbReference>
<dbReference type="PIR" id="D96571">
    <property type="entry name" value="D96571"/>
</dbReference>
<dbReference type="RefSeq" id="NP_175716.1">
    <property type="nucleotide sequence ID" value="NM_104187.2"/>
</dbReference>
<dbReference type="SMR" id="Q9LNN3"/>
<dbReference type="BioGRID" id="26967">
    <property type="interactions" value="1"/>
</dbReference>
<dbReference type="STRING" id="3702.Q9LNN3"/>
<dbReference type="GlyGen" id="Q9LNN3">
    <property type="glycosylation" value="2 sites"/>
</dbReference>
<dbReference type="PaxDb" id="3702-AT1G53080.1"/>
<dbReference type="EnsemblPlants" id="AT1G53080.1">
    <property type="protein sequence ID" value="AT1G53080.1"/>
    <property type="gene ID" value="AT1G53080"/>
</dbReference>
<dbReference type="GeneID" id="841742"/>
<dbReference type="Gramene" id="AT1G53080.1">
    <property type="protein sequence ID" value="AT1G53080.1"/>
    <property type="gene ID" value="AT1G53080"/>
</dbReference>
<dbReference type="KEGG" id="ath:AT1G53080"/>
<dbReference type="Araport" id="AT1G53080"/>
<dbReference type="TAIR" id="AT1G53080"/>
<dbReference type="eggNOG" id="ENOG502QRZ3">
    <property type="taxonomic scope" value="Eukaryota"/>
</dbReference>
<dbReference type="HOGENOM" id="CLU_000288_62_2_1"/>
<dbReference type="InParanoid" id="Q9LNN3"/>
<dbReference type="OMA" id="VLETMYT"/>
<dbReference type="OrthoDB" id="543442at2759"/>
<dbReference type="PhylomeDB" id="Q9LNN3"/>
<dbReference type="PRO" id="PR:Q9LNN3"/>
<dbReference type="Proteomes" id="UP000006548">
    <property type="component" value="Chromosome 1"/>
</dbReference>
<dbReference type="ExpressionAtlas" id="Q9LNN3">
    <property type="expression patterns" value="baseline and differential"/>
</dbReference>
<dbReference type="GO" id="GO:0048046">
    <property type="term" value="C:apoplast"/>
    <property type="evidence" value="ECO:0007669"/>
    <property type="project" value="UniProtKB-SubCell"/>
</dbReference>
<dbReference type="GO" id="GO:0005634">
    <property type="term" value="C:nucleus"/>
    <property type="evidence" value="ECO:0007005"/>
    <property type="project" value="TAIR"/>
</dbReference>
<dbReference type="GO" id="GO:0030246">
    <property type="term" value="F:carbohydrate binding"/>
    <property type="evidence" value="ECO:0007669"/>
    <property type="project" value="UniProtKB-KW"/>
</dbReference>
<dbReference type="CDD" id="cd06899">
    <property type="entry name" value="lectin_legume_LecRK_Arcelin_ConA"/>
    <property type="match status" value="1"/>
</dbReference>
<dbReference type="FunFam" id="2.60.120.200:FF:000236">
    <property type="entry name" value="Legume lectin family protein"/>
    <property type="match status" value="1"/>
</dbReference>
<dbReference type="Gene3D" id="2.60.120.200">
    <property type="match status" value="1"/>
</dbReference>
<dbReference type="InterPro" id="IPR013320">
    <property type="entry name" value="ConA-like_dom_sf"/>
</dbReference>
<dbReference type="InterPro" id="IPR016363">
    <property type="entry name" value="L-lectin"/>
</dbReference>
<dbReference type="InterPro" id="IPR001220">
    <property type="entry name" value="Legume_lectin_dom"/>
</dbReference>
<dbReference type="InterPro" id="IPR050258">
    <property type="entry name" value="Leguminous_Lectin"/>
</dbReference>
<dbReference type="PANTHER" id="PTHR32401:SF40">
    <property type="entry name" value="(RAPE) HYPOTHETICAL PROTEIN"/>
    <property type="match status" value="1"/>
</dbReference>
<dbReference type="PANTHER" id="PTHR32401">
    <property type="entry name" value="CONCANAVALIN A-LIKE LECTIN FAMILY PROTEIN"/>
    <property type="match status" value="1"/>
</dbReference>
<dbReference type="Pfam" id="PF00139">
    <property type="entry name" value="Lectin_legB"/>
    <property type="match status" value="1"/>
</dbReference>
<dbReference type="PIRSF" id="PIRSF002690">
    <property type="entry name" value="L-type_lectin_plant"/>
    <property type="match status" value="1"/>
</dbReference>
<dbReference type="SUPFAM" id="SSF49899">
    <property type="entry name" value="Concanavalin A-like lectins/glucanases"/>
    <property type="match status" value="1"/>
</dbReference>
<comment type="subcellular location">
    <subcellularLocation>
        <location evidence="1">Secreted</location>
        <location evidence="1">Extracellular space</location>
        <location evidence="1">Apoplast</location>
    </subcellularLocation>
</comment>
<comment type="similarity">
    <text evidence="4">Belongs to the leguminous lectin family.</text>
</comment>